<dbReference type="EMBL" id="EF115543">
    <property type="protein sequence ID" value="ABK79621.1"/>
    <property type="molecule type" value="Genomic_DNA"/>
</dbReference>
<dbReference type="EMBL" id="EF115543">
    <property type="protein sequence ID" value="ABK79643.1"/>
    <property type="molecule type" value="Genomic_DNA"/>
</dbReference>
<dbReference type="SMR" id="A1EA50"/>
<dbReference type="GO" id="GO:0009507">
    <property type="term" value="C:chloroplast"/>
    <property type="evidence" value="ECO:0007669"/>
    <property type="project" value="UniProtKB-SubCell"/>
</dbReference>
<dbReference type="GO" id="GO:0005762">
    <property type="term" value="C:mitochondrial large ribosomal subunit"/>
    <property type="evidence" value="ECO:0007669"/>
    <property type="project" value="TreeGrafter"/>
</dbReference>
<dbReference type="GO" id="GO:0019843">
    <property type="term" value="F:rRNA binding"/>
    <property type="evidence" value="ECO:0007669"/>
    <property type="project" value="UniProtKB-UniRule"/>
</dbReference>
<dbReference type="GO" id="GO:0003735">
    <property type="term" value="F:structural constituent of ribosome"/>
    <property type="evidence" value="ECO:0007669"/>
    <property type="project" value="InterPro"/>
</dbReference>
<dbReference type="GO" id="GO:0016740">
    <property type="term" value="F:transferase activity"/>
    <property type="evidence" value="ECO:0007669"/>
    <property type="project" value="InterPro"/>
</dbReference>
<dbReference type="GO" id="GO:0032543">
    <property type="term" value="P:mitochondrial translation"/>
    <property type="evidence" value="ECO:0007669"/>
    <property type="project" value="TreeGrafter"/>
</dbReference>
<dbReference type="FunFam" id="4.10.950.10:FF:000001">
    <property type="entry name" value="50S ribosomal protein L2"/>
    <property type="match status" value="1"/>
</dbReference>
<dbReference type="FunFam" id="2.30.30.30:FF:000008">
    <property type="entry name" value="50S ribosomal protein L2, chloroplastic"/>
    <property type="match status" value="1"/>
</dbReference>
<dbReference type="FunFam" id="2.40.50.140:FF:000029">
    <property type="entry name" value="50S ribosomal protein L2, chloroplastic"/>
    <property type="match status" value="1"/>
</dbReference>
<dbReference type="Gene3D" id="2.30.30.30">
    <property type="match status" value="1"/>
</dbReference>
<dbReference type="Gene3D" id="2.40.50.140">
    <property type="entry name" value="Nucleic acid-binding proteins"/>
    <property type="match status" value="1"/>
</dbReference>
<dbReference type="Gene3D" id="4.10.950.10">
    <property type="entry name" value="Ribosomal protein L2, domain 3"/>
    <property type="match status" value="1"/>
</dbReference>
<dbReference type="HAMAP" id="MF_01320_B">
    <property type="entry name" value="Ribosomal_uL2_B"/>
    <property type="match status" value="1"/>
</dbReference>
<dbReference type="InterPro" id="IPR012340">
    <property type="entry name" value="NA-bd_OB-fold"/>
</dbReference>
<dbReference type="InterPro" id="IPR014722">
    <property type="entry name" value="Rib_uL2_dom2"/>
</dbReference>
<dbReference type="InterPro" id="IPR002171">
    <property type="entry name" value="Ribosomal_uL2"/>
</dbReference>
<dbReference type="InterPro" id="IPR005880">
    <property type="entry name" value="Ribosomal_uL2_bac/org-type"/>
</dbReference>
<dbReference type="InterPro" id="IPR022669">
    <property type="entry name" value="Ribosomal_uL2_C"/>
</dbReference>
<dbReference type="InterPro" id="IPR022671">
    <property type="entry name" value="Ribosomal_uL2_CS"/>
</dbReference>
<dbReference type="InterPro" id="IPR014726">
    <property type="entry name" value="Ribosomal_uL2_dom3"/>
</dbReference>
<dbReference type="InterPro" id="IPR022666">
    <property type="entry name" value="Ribosomal_uL2_RNA-bd_dom"/>
</dbReference>
<dbReference type="InterPro" id="IPR008991">
    <property type="entry name" value="Translation_prot_SH3-like_sf"/>
</dbReference>
<dbReference type="NCBIfam" id="TIGR01171">
    <property type="entry name" value="rplB_bact"/>
    <property type="match status" value="1"/>
</dbReference>
<dbReference type="PANTHER" id="PTHR13691:SF57">
    <property type="entry name" value="LARGE RIBOSOMAL SUBUNIT PROTEIN UL2CZ_UL2CY"/>
    <property type="match status" value="1"/>
</dbReference>
<dbReference type="PANTHER" id="PTHR13691">
    <property type="entry name" value="RIBOSOMAL PROTEIN L2"/>
    <property type="match status" value="1"/>
</dbReference>
<dbReference type="Pfam" id="PF00181">
    <property type="entry name" value="Ribosomal_L2"/>
    <property type="match status" value="1"/>
</dbReference>
<dbReference type="Pfam" id="PF03947">
    <property type="entry name" value="Ribosomal_L2_C"/>
    <property type="match status" value="1"/>
</dbReference>
<dbReference type="PIRSF" id="PIRSF002158">
    <property type="entry name" value="Ribosomal_L2"/>
    <property type="match status" value="1"/>
</dbReference>
<dbReference type="SMART" id="SM01383">
    <property type="entry name" value="Ribosomal_L2"/>
    <property type="match status" value="1"/>
</dbReference>
<dbReference type="SMART" id="SM01382">
    <property type="entry name" value="Ribosomal_L2_C"/>
    <property type="match status" value="1"/>
</dbReference>
<dbReference type="SUPFAM" id="SSF50249">
    <property type="entry name" value="Nucleic acid-binding proteins"/>
    <property type="match status" value="1"/>
</dbReference>
<dbReference type="SUPFAM" id="SSF50104">
    <property type="entry name" value="Translation proteins SH3-like domain"/>
    <property type="match status" value="1"/>
</dbReference>
<dbReference type="PROSITE" id="PS00467">
    <property type="entry name" value="RIBOSOMAL_L2"/>
    <property type="match status" value="1"/>
</dbReference>
<accession>A1EA50</accession>
<geneLocation type="chloroplast"/>
<name>RK2_AGRST</name>
<reference key="1">
    <citation type="journal article" date="2007" name="Theor. Appl. Genet.">
        <title>Complete chloroplast genome sequences of Hordeum vulgare, Sorghum bicolor and Agrostis stolonifera, and comparative analyses with other grass genomes.</title>
        <authorList>
            <person name="Saski C."/>
            <person name="Lee S.-B."/>
            <person name="Fjellheim S."/>
            <person name="Guda C."/>
            <person name="Jansen R.K."/>
            <person name="Luo H."/>
            <person name="Tomkins J."/>
            <person name="Rognli O.A."/>
            <person name="Daniell H."/>
            <person name="Clarke J.L."/>
        </authorList>
    </citation>
    <scope>NUCLEOTIDE SEQUENCE [LARGE SCALE GENOMIC DNA]</scope>
    <source>
        <strain>cv. Penn A-4</strain>
    </source>
</reference>
<comment type="subunit">
    <text evidence="1">Part of the 50S ribosomal subunit.</text>
</comment>
<comment type="subcellular location">
    <subcellularLocation>
        <location>Plastid</location>
        <location>Chloroplast</location>
    </subcellularLocation>
</comment>
<comment type="similarity">
    <text evidence="4">Belongs to the universal ribosomal protein uL2 family.</text>
</comment>
<feature type="chain" id="PRO_0000277082" description="Large ribosomal subunit protein uL2cz/uL2cy">
    <location>
        <begin position="1"/>
        <end position="273"/>
    </location>
</feature>
<feature type="region of interest" description="Disordered" evidence="3">
    <location>
        <begin position="1"/>
        <end position="27"/>
    </location>
</feature>
<feature type="region of interest" description="Disordered" evidence="3">
    <location>
        <begin position="225"/>
        <end position="273"/>
    </location>
</feature>
<organism>
    <name type="scientific">Agrostis stolonifera</name>
    <name type="common">Creeping bentgrass</name>
    <dbReference type="NCBI Taxonomy" id="63632"/>
    <lineage>
        <taxon>Eukaryota</taxon>
        <taxon>Viridiplantae</taxon>
        <taxon>Streptophyta</taxon>
        <taxon>Embryophyta</taxon>
        <taxon>Tracheophyta</taxon>
        <taxon>Spermatophyta</taxon>
        <taxon>Magnoliopsida</taxon>
        <taxon>Liliopsida</taxon>
        <taxon>Poales</taxon>
        <taxon>Poaceae</taxon>
        <taxon>BOP clade</taxon>
        <taxon>Pooideae</taxon>
        <taxon>Poodae</taxon>
        <taxon>Poeae</taxon>
        <taxon>Poeae Chloroplast Group 1 (Aveneae type)</taxon>
        <taxon>Agrostidodinae</taxon>
        <taxon>Agrostidinae</taxon>
        <taxon>Agrostis</taxon>
    </lineage>
</organism>
<proteinExistence type="inferred from homology"/>
<sequence>MAKHLYKTPIPSTRKGTVDRQVKSNPRNNLIHGRHRCGKGRNSRGIITARHRGGGHKRLYRKIDFRRNQKDISGRIVTIEYDPNRNAYICLIHYGDGEKRYILHPRGAIIGDTIVSGTKVPISMGNALPLTDMPLGTAMHNIEITRGRGGQLARAAGAVAKLIAKEGKSATLRLPSGEVRLVSQNCLATVGQVGNVGVNQKSLGRAGSKCWLGKRPVVRGVVMNPVDHPHGGGEGKAPIGRKKPTTPWGYPALGRRTRKRKKYSDSFILRRRK</sequence>
<keyword id="KW-0150">Chloroplast</keyword>
<keyword id="KW-0934">Plastid</keyword>
<keyword id="KW-0687">Ribonucleoprotein</keyword>
<keyword id="KW-0689">Ribosomal protein</keyword>
<protein>
    <recommendedName>
        <fullName evidence="2">Large ribosomal subunit protein uL2cz/uL2cy</fullName>
    </recommendedName>
    <alternativeName>
        <fullName evidence="4">50S ribosomal protein L2, chloroplastic</fullName>
    </alternativeName>
</protein>
<evidence type="ECO:0000250" key="1"/>
<evidence type="ECO:0000255" key="2">
    <source>
        <dbReference type="HAMAP-Rule" id="MF_01320"/>
    </source>
</evidence>
<evidence type="ECO:0000256" key="3">
    <source>
        <dbReference type="SAM" id="MobiDB-lite"/>
    </source>
</evidence>
<evidence type="ECO:0000305" key="4"/>
<gene>
    <name type="primary">rpl2-A</name>
</gene>
<gene>
    <name type="primary">rpl2-B</name>
</gene>